<gene>
    <name evidence="1" type="primary">recR</name>
    <name type="ordered locus">Ctha_1158</name>
</gene>
<protein>
    <recommendedName>
        <fullName evidence="1">Recombination protein RecR</fullName>
    </recommendedName>
</protein>
<evidence type="ECO:0000255" key="1">
    <source>
        <dbReference type="HAMAP-Rule" id="MF_00017"/>
    </source>
</evidence>
<name>RECR_CHLT3</name>
<feature type="chain" id="PRO_1000089718" description="Recombination protein RecR">
    <location>
        <begin position="1"/>
        <end position="205"/>
    </location>
</feature>
<feature type="domain" description="Toprim" evidence="1">
    <location>
        <begin position="83"/>
        <end position="182"/>
    </location>
</feature>
<feature type="zinc finger region" description="C4-type" evidence="1">
    <location>
        <begin position="58"/>
        <end position="75"/>
    </location>
</feature>
<reference key="1">
    <citation type="submission" date="2008-06" db="EMBL/GenBank/DDBJ databases">
        <title>Complete sequence of Chloroherpeton thalassium ATCC 35110.</title>
        <authorList>
            <consortium name="US DOE Joint Genome Institute"/>
            <person name="Lucas S."/>
            <person name="Copeland A."/>
            <person name="Lapidus A."/>
            <person name="Glavina del Rio T."/>
            <person name="Dalin E."/>
            <person name="Tice H."/>
            <person name="Bruce D."/>
            <person name="Goodwin L."/>
            <person name="Pitluck S."/>
            <person name="Schmutz J."/>
            <person name="Larimer F."/>
            <person name="Land M."/>
            <person name="Hauser L."/>
            <person name="Kyrpides N."/>
            <person name="Mikhailova N."/>
            <person name="Liu Z."/>
            <person name="Li T."/>
            <person name="Zhao F."/>
            <person name="Overmann J."/>
            <person name="Bryant D.A."/>
            <person name="Richardson P."/>
        </authorList>
    </citation>
    <scope>NUCLEOTIDE SEQUENCE [LARGE SCALE GENOMIC DNA]</scope>
    <source>
        <strain>ATCC 35110 / GB-78</strain>
    </source>
</reference>
<proteinExistence type="inferred from homology"/>
<organism>
    <name type="scientific">Chloroherpeton thalassium (strain ATCC 35110 / GB-78)</name>
    <dbReference type="NCBI Taxonomy" id="517418"/>
    <lineage>
        <taxon>Bacteria</taxon>
        <taxon>Pseudomonadati</taxon>
        <taxon>Chlorobiota</taxon>
        <taxon>Chlorobiia</taxon>
        <taxon>Chlorobiales</taxon>
        <taxon>Chloroherpetonaceae</taxon>
        <taxon>Chloroherpeton</taxon>
    </lineage>
</organism>
<dbReference type="EMBL" id="CP001100">
    <property type="protein sequence ID" value="ACF13622.1"/>
    <property type="molecule type" value="Genomic_DNA"/>
</dbReference>
<dbReference type="RefSeq" id="WP_012499706.1">
    <property type="nucleotide sequence ID" value="NC_011026.1"/>
</dbReference>
<dbReference type="SMR" id="B3QYJ4"/>
<dbReference type="STRING" id="517418.Ctha_1158"/>
<dbReference type="KEGG" id="cts:Ctha_1158"/>
<dbReference type="eggNOG" id="COG0353">
    <property type="taxonomic scope" value="Bacteria"/>
</dbReference>
<dbReference type="HOGENOM" id="CLU_060739_1_0_10"/>
<dbReference type="OrthoDB" id="9802672at2"/>
<dbReference type="Proteomes" id="UP000001208">
    <property type="component" value="Chromosome"/>
</dbReference>
<dbReference type="GO" id="GO:0003677">
    <property type="term" value="F:DNA binding"/>
    <property type="evidence" value="ECO:0007669"/>
    <property type="project" value="UniProtKB-UniRule"/>
</dbReference>
<dbReference type="GO" id="GO:0008270">
    <property type="term" value="F:zinc ion binding"/>
    <property type="evidence" value="ECO:0007669"/>
    <property type="project" value="UniProtKB-KW"/>
</dbReference>
<dbReference type="GO" id="GO:0006310">
    <property type="term" value="P:DNA recombination"/>
    <property type="evidence" value="ECO:0007669"/>
    <property type="project" value="UniProtKB-UniRule"/>
</dbReference>
<dbReference type="GO" id="GO:0006281">
    <property type="term" value="P:DNA repair"/>
    <property type="evidence" value="ECO:0007669"/>
    <property type="project" value="UniProtKB-UniRule"/>
</dbReference>
<dbReference type="CDD" id="cd01025">
    <property type="entry name" value="TOPRIM_recR"/>
    <property type="match status" value="1"/>
</dbReference>
<dbReference type="Gene3D" id="3.40.1360.10">
    <property type="match status" value="1"/>
</dbReference>
<dbReference type="Gene3D" id="6.10.250.240">
    <property type="match status" value="1"/>
</dbReference>
<dbReference type="Gene3D" id="1.10.8.420">
    <property type="entry name" value="RecR Domain 1"/>
    <property type="match status" value="1"/>
</dbReference>
<dbReference type="HAMAP" id="MF_00017">
    <property type="entry name" value="RecR"/>
    <property type="match status" value="1"/>
</dbReference>
<dbReference type="InterPro" id="IPR000093">
    <property type="entry name" value="DNA_Rcmb_RecR"/>
</dbReference>
<dbReference type="InterPro" id="IPR023627">
    <property type="entry name" value="Rcmb_RecR"/>
</dbReference>
<dbReference type="InterPro" id="IPR006171">
    <property type="entry name" value="TOPRIM_dom"/>
</dbReference>
<dbReference type="InterPro" id="IPR034137">
    <property type="entry name" value="TOPRIM_RecR"/>
</dbReference>
<dbReference type="NCBIfam" id="TIGR00615">
    <property type="entry name" value="recR"/>
    <property type="match status" value="1"/>
</dbReference>
<dbReference type="PANTHER" id="PTHR30446">
    <property type="entry name" value="RECOMBINATION PROTEIN RECR"/>
    <property type="match status" value="1"/>
</dbReference>
<dbReference type="PANTHER" id="PTHR30446:SF0">
    <property type="entry name" value="RECOMBINATION PROTEIN RECR"/>
    <property type="match status" value="1"/>
</dbReference>
<dbReference type="Pfam" id="PF21175">
    <property type="entry name" value="RecR_C"/>
    <property type="match status" value="1"/>
</dbReference>
<dbReference type="Pfam" id="PF21176">
    <property type="entry name" value="RecR_HhH"/>
    <property type="match status" value="1"/>
</dbReference>
<dbReference type="Pfam" id="PF13662">
    <property type="entry name" value="Toprim_4"/>
    <property type="match status" value="1"/>
</dbReference>
<dbReference type="SMART" id="SM00493">
    <property type="entry name" value="TOPRIM"/>
    <property type="match status" value="1"/>
</dbReference>
<dbReference type="SUPFAM" id="SSF111304">
    <property type="entry name" value="Recombination protein RecR"/>
    <property type="match status" value="1"/>
</dbReference>
<dbReference type="PROSITE" id="PS50880">
    <property type="entry name" value="TOPRIM"/>
    <property type="match status" value="1"/>
</dbReference>
<sequence length="205" mass="22842">MRYTSHAVETLIDEFAKLPGIGRKTAQRLTMFILHEEKEKVESLAQALLDLKNKVSYCSLCQNVTDKEIDPCNICTSVKRDKRVVCVVEAPNDVLAFEKTNQYNGLYHVLHGVISPLDGVGPDDLKVKELIHRLSETDPETSIKEVILAINPTVEGETTVLYLSKLLKPLGVKVTRIARGIPIGTELEYIDDATLTRALEGRSEL</sequence>
<accession>B3QYJ4</accession>
<comment type="function">
    <text evidence="1">May play a role in DNA repair. It seems to be involved in an RecBC-independent recombinational process of DNA repair. It may act with RecF and RecO.</text>
</comment>
<comment type="similarity">
    <text evidence="1">Belongs to the RecR family.</text>
</comment>
<keyword id="KW-0227">DNA damage</keyword>
<keyword id="KW-0233">DNA recombination</keyword>
<keyword id="KW-0234">DNA repair</keyword>
<keyword id="KW-0479">Metal-binding</keyword>
<keyword id="KW-1185">Reference proteome</keyword>
<keyword id="KW-0862">Zinc</keyword>
<keyword id="KW-0863">Zinc-finger</keyword>